<name>NDUS8_PONAB</name>
<evidence type="ECO:0000250" key="1">
    <source>
        <dbReference type="UniProtKB" id="O00217"/>
    </source>
</evidence>
<evidence type="ECO:0000250" key="2">
    <source>
        <dbReference type="UniProtKB" id="P42028"/>
    </source>
</evidence>
<evidence type="ECO:0000250" key="3">
    <source>
        <dbReference type="UniProtKB" id="Q56224"/>
    </source>
</evidence>
<evidence type="ECO:0000255" key="4"/>
<evidence type="ECO:0000255" key="5">
    <source>
        <dbReference type="PROSITE-ProRule" id="PRU00711"/>
    </source>
</evidence>
<evidence type="ECO:0000305" key="6"/>
<accession>P0CB97</accession>
<accession>Q0MQI1</accession>
<accession>Q5RC57</accession>
<proteinExistence type="evidence at transcript level"/>
<feature type="transit peptide" description="Mitochondrion" evidence="4">
    <location>
        <begin position="1"/>
        <end position="34"/>
    </location>
</feature>
<feature type="chain" id="PRO_0000250704" description="NADH dehydrogenase [ubiquinone] iron-sulfur protein 8, mitochondrial">
    <location>
        <begin position="35"/>
        <end position="210"/>
    </location>
</feature>
<feature type="domain" description="4Fe-4S ferredoxin-type 1" evidence="5">
    <location>
        <begin position="102"/>
        <end position="131"/>
    </location>
</feature>
<feature type="domain" description="4Fe-4S ferredoxin-type 2" evidence="5">
    <location>
        <begin position="141"/>
        <end position="170"/>
    </location>
</feature>
<feature type="binding site" evidence="5">
    <location>
        <position position="111"/>
    </location>
    <ligand>
        <name>[4Fe-4S] cluster</name>
        <dbReference type="ChEBI" id="CHEBI:49883"/>
        <label>1</label>
    </ligand>
</feature>
<feature type="binding site" evidence="5">
    <location>
        <position position="114"/>
    </location>
    <ligand>
        <name>[4Fe-4S] cluster</name>
        <dbReference type="ChEBI" id="CHEBI:49883"/>
        <label>1</label>
    </ligand>
</feature>
<feature type="binding site" evidence="5">
    <location>
        <position position="117"/>
    </location>
    <ligand>
        <name>[4Fe-4S] cluster</name>
        <dbReference type="ChEBI" id="CHEBI:49883"/>
        <label>1</label>
    </ligand>
</feature>
<feature type="binding site" evidence="5">
    <location>
        <position position="121"/>
    </location>
    <ligand>
        <name>[4Fe-4S] cluster</name>
        <dbReference type="ChEBI" id="CHEBI:49883"/>
        <label>2</label>
    </ligand>
</feature>
<feature type="binding site" evidence="5">
    <location>
        <position position="150"/>
    </location>
    <ligand>
        <name>[4Fe-4S] cluster</name>
        <dbReference type="ChEBI" id="CHEBI:49883"/>
        <label>2</label>
    </ligand>
</feature>
<feature type="binding site" evidence="5">
    <location>
        <position position="153"/>
    </location>
    <ligand>
        <name>[4Fe-4S] cluster</name>
        <dbReference type="ChEBI" id="CHEBI:49883"/>
        <label>2</label>
    </ligand>
</feature>
<feature type="binding site" evidence="5">
    <location>
        <position position="156"/>
    </location>
    <ligand>
        <name>[4Fe-4S] cluster</name>
        <dbReference type="ChEBI" id="CHEBI:49883"/>
        <label>2</label>
    </ligand>
</feature>
<feature type="binding site" evidence="5">
    <location>
        <position position="160"/>
    </location>
    <ligand>
        <name>[4Fe-4S] cluster</name>
        <dbReference type="ChEBI" id="CHEBI:49883"/>
        <label>1</label>
    </ligand>
</feature>
<reference key="1">
    <citation type="submission" date="2004-11" db="EMBL/GenBank/DDBJ databases">
        <authorList>
            <consortium name="The German cDNA consortium"/>
        </authorList>
    </citation>
    <scope>NUCLEOTIDE SEQUENCE [LARGE SCALE MRNA]</scope>
    <source>
        <tissue>Heart</tissue>
    </source>
</reference>
<keyword id="KW-0004">4Fe-4S</keyword>
<keyword id="KW-0249">Electron transport</keyword>
<keyword id="KW-0408">Iron</keyword>
<keyword id="KW-0411">Iron-sulfur</keyword>
<keyword id="KW-0472">Membrane</keyword>
<keyword id="KW-0479">Metal-binding</keyword>
<keyword id="KW-0496">Mitochondrion</keyword>
<keyword id="KW-0999">Mitochondrion inner membrane</keyword>
<keyword id="KW-0520">NAD</keyword>
<keyword id="KW-0560">Oxidoreductase</keyword>
<keyword id="KW-1185">Reference proteome</keyword>
<keyword id="KW-0677">Repeat</keyword>
<keyword id="KW-0679">Respiratory chain</keyword>
<keyword id="KW-0809">Transit peptide</keyword>
<keyword id="KW-1278">Translocase</keyword>
<keyword id="KW-0813">Transport</keyword>
<keyword id="KW-0830">Ubiquinone</keyword>
<comment type="function">
    <text evidence="1">Core subunit of the mitochondrial membrane respiratory chain NADH dehydrogenase (Complex I) which catalyzes electron transfer from NADH through the respiratory chain, using ubiquinone as an electron acceptor (By similarity). Essential for the catalytic activity and assembly of complex I (By similarity).</text>
</comment>
<comment type="catalytic activity">
    <reaction evidence="1">
        <text>a ubiquinone + NADH + 5 H(+)(in) = a ubiquinol + NAD(+) + 4 H(+)(out)</text>
        <dbReference type="Rhea" id="RHEA:29091"/>
        <dbReference type="Rhea" id="RHEA-COMP:9565"/>
        <dbReference type="Rhea" id="RHEA-COMP:9566"/>
        <dbReference type="ChEBI" id="CHEBI:15378"/>
        <dbReference type="ChEBI" id="CHEBI:16389"/>
        <dbReference type="ChEBI" id="CHEBI:17976"/>
        <dbReference type="ChEBI" id="CHEBI:57540"/>
        <dbReference type="ChEBI" id="CHEBI:57945"/>
        <dbReference type="EC" id="7.1.1.2"/>
    </reaction>
</comment>
<comment type="cofactor">
    <cofactor evidence="3">
        <name>[4Fe-4S] cluster</name>
        <dbReference type="ChEBI" id="CHEBI:49883"/>
    </cofactor>
    <text evidence="3">Binds 2 [4Fe-4S] cluster.</text>
</comment>
<comment type="subunit">
    <text evidence="1 2">Core subunit of respiratory chain NADH dehydrogenase (Complex I) which is composed of 45 different subunits (By similarity). This is a component of the iron-sulfur (IP) fragment of the enzyme (By similarity). Interacts with RAB5IF (By similarity).</text>
</comment>
<comment type="subcellular location">
    <subcellularLocation>
        <location evidence="2">Mitochondrion inner membrane</location>
        <topology evidence="2">Peripheral membrane protein</topology>
        <orientation evidence="2">Matrix side</orientation>
    </subcellularLocation>
</comment>
<comment type="similarity">
    <text evidence="6">Belongs to the complex I 23 kDa subunit family.</text>
</comment>
<sequence>MRCLTTPMLLRALAQAARAGPPCGRSLHSSAVAATYKYVNMQEPEMDMKSVTDRAARTLLLTELFRGLGMTLSYLFREPATINYPFEKGPLSPRFRGEHALRRYPSGEERCIACKLCEAICPAQAITIEAEPRADGSRRTTRYDIDMTKCIYCGFCQEACPVDAIVEGPNFEFSTETHEELLYNKEKLLNNGDKWEAEIAANIQADYLYR</sequence>
<protein>
    <recommendedName>
        <fullName>NADH dehydrogenase [ubiquinone] iron-sulfur protein 8, mitochondrial</fullName>
        <ecNumber evidence="1">7.1.1.2</ecNumber>
    </recommendedName>
    <alternativeName>
        <fullName>Complex I-23kD</fullName>
        <shortName>CI-23kD</shortName>
    </alternativeName>
    <alternativeName>
        <fullName>NADH-ubiquinone oxidoreductase 23 kDa subunit</fullName>
    </alternativeName>
</protein>
<organism>
    <name type="scientific">Pongo abelii</name>
    <name type="common">Sumatran orangutan</name>
    <name type="synonym">Pongo pygmaeus abelii</name>
    <dbReference type="NCBI Taxonomy" id="9601"/>
    <lineage>
        <taxon>Eukaryota</taxon>
        <taxon>Metazoa</taxon>
        <taxon>Chordata</taxon>
        <taxon>Craniata</taxon>
        <taxon>Vertebrata</taxon>
        <taxon>Euteleostomi</taxon>
        <taxon>Mammalia</taxon>
        <taxon>Eutheria</taxon>
        <taxon>Euarchontoglires</taxon>
        <taxon>Primates</taxon>
        <taxon>Haplorrhini</taxon>
        <taxon>Catarrhini</taxon>
        <taxon>Hominidae</taxon>
        <taxon>Pongo</taxon>
    </lineage>
</organism>
<dbReference type="EC" id="7.1.1.2" evidence="1"/>
<dbReference type="EMBL" id="CR858424">
    <property type="protein sequence ID" value="CAH90653.1"/>
    <property type="molecule type" value="mRNA"/>
</dbReference>
<dbReference type="RefSeq" id="NP_001125353.1">
    <property type="nucleotide sequence ID" value="NM_001131881.2"/>
</dbReference>
<dbReference type="RefSeq" id="XP_009244339.1">
    <property type="nucleotide sequence ID" value="XM_009246064.4"/>
</dbReference>
<dbReference type="RefSeq" id="XP_024110216.1">
    <property type="nucleotide sequence ID" value="XM_024254448.3"/>
</dbReference>
<dbReference type="RefSeq" id="XP_054379659.1">
    <property type="nucleotide sequence ID" value="XM_054523684.1"/>
</dbReference>
<dbReference type="RefSeq" id="XP_054379660.1">
    <property type="nucleotide sequence ID" value="XM_054523685.2"/>
</dbReference>
<dbReference type="SMR" id="P0CB97"/>
<dbReference type="FunCoup" id="P0CB97">
    <property type="interactions" value="1774"/>
</dbReference>
<dbReference type="STRING" id="9601.ENSPPYP00000003451"/>
<dbReference type="GeneID" id="100172255"/>
<dbReference type="KEGG" id="pon:100172255"/>
<dbReference type="CTD" id="4728"/>
<dbReference type="eggNOG" id="KOG3256">
    <property type="taxonomic scope" value="Eukaryota"/>
</dbReference>
<dbReference type="HOGENOM" id="CLU_067218_5_1_1"/>
<dbReference type="InParanoid" id="P0CB97"/>
<dbReference type="OrthoDB" id="204405at2759"/>
<dbReference type="TreeFam" id="TF105610"/>
<dbReference type="Proteomes" id="UP000001595">
    <property type="component" value="Chromosome 11"/>
</dbReference>
<dbReference type="GO" id="GO:0005743">
    <property type="term" value="C:mitochondrial inner membrane"/>
    <property type="evidence" value="ECO:0000250"/>
    <property type="project" value="UniProtKB"/>
</dbReference>
<dbReference type="GO" id="GO:0005739">
    <property type="term" value="C:mitochondrion"/>
    <property type="evidence" value="ECO:0000250"/>
    <property type="project" value="UniProtKB"/>
</dbReference>
<dbReference type="GO" id="GO:0045271">
    <property type="term" value="C:respiratory chain complex I"/>
    <property type="evidence" value="ECO:0000250"/>
    <property type="project" value="UniProtKB"/>
</dbReference>
<dbReference type="GO" id="GO:0051539">
    <property type="term" value="F:4 iron, 4 sulfur cluster binding"/>
    <property type="evidence" value="ECO:0007669"/>
    <property type="project" value="UniProtKB-KW"/>
</dbReference>
<dbReference type="GO" id="GO:0046872">
    <property type="term" value="F:metal ion binding"/>
    <property type="evidence" value="ECO:0007669"/>
    <property type="project" value="UniProtKB-KW"/>
</dbReference>
<dbReference type="GO" id="GO:0008137">
    <property type="term" value="F:NADH dehydrogenase (ubiquinone) activity"/>
    <property type="evidence" value="ECO:0000250"/>
    <property type="project" value="UniProtKB"/>
</dbReference>
<dbReference type="GO" id="GO:0006120">
    <property type="term" value="P:mitochondrial electron transport, NADH to ubiquinone"/>
    <property type="evidence" value="ECO:0000250"/>
    <property type="project" value="UniProtKB"/>
</dbReference>
<dbReference type="GO" id="GO:0032981">
    <property type="term" value="P:mitochondrial respiratory chain complex I assembly"/>
    <property type="evidence" value="ECO:0000250"/>
    <property type="project" value="UniProtKB"/>
</dbReference>
<dbReference type="FunFam" id="3.30.70.3270:FF:000001">
    <property type="entry name" value="NADH-quinone oxidoreductase subunit I 1"/>
    <property type="match status" value="1"/>
</dbReference>
<dbReference type="Gene3D" id="3.30.70.3270">
    <property type="match status" value="1"/>
</dbReference>
<dbReference type="HAMAP" id="MF_01351">
    <property type="entry name" value="NDH1_NuoI"/>
    <property type="match status" value="1"/>
</dbReference>
<dbReference type="InterPro" id="IPR017896">
    <property type="entry name" value="4Fe4S_Fe-S-bd"/>
</dbReference>
<dbReference type="InterPro" id="IPR017900">
    <property type="entry name" value="4Fe4S_Fe_S_CS"/>
</dbReference>
<dbReference type="InterPro" id="IPR010226">
    <property type="entry name" value="NADH_quinone_OxRdtase_chainI"/>
</dbReference>
<dbReference type="NCBIfam" id="TIGR01971">
    <property type="entry name" value="NuoI"/>
    <property type="match status" value="1"/>
</dbReference>
<dbReference type="NCBIfam" id="NF004538">
    <property type="entry name" value="PRK05888.1-4"/>
    <property type="match status" value="1"/>
</dbReference>
<dbReference type="NCBIfam" id="NF004539">
    <property type="entry name" value="PRK05888.1-5"/>
    <property type="match status" value="1"/>
</dbReference>
<dbReference type="PANTHER" id="PTHR10849:SF20">
    <property type="entry name" value="NADH DEHYDROGENASE [UBIQUINONE] IRON-SULFUR PROTEIN 8, MITOCHONDRIAL"/>
    <property type="match status" value="1"/>
</dbReference>
<dbReference type="PANTHER" id="PTHR10849">
    <property type="entry name" value="NADH DEHYDROGENASE UBIQUINONE IRON-SULFUR PROTEIN 8, MITOCHONDRIAL"/>
    <property type="match status" value="1"/>
</dbReference>
<dbReference type="Pfam" id="PF12838">
    <property type="entry name" value="Fer4_7"/>
    <property type="match status" value="1"/>
</dbReference>
<dbReference type="SUPFAM" id="SSF54862">
    <property type="entry name" value="4Fe-4S ferredoxins"/>
    <property type="match status" value="1"/>
</dbReference>
<dbReference type="PROSITE" id="PS00198">
    <property type="entry name" value="4FE4S_FER_1"/>
    <property type="match status" value="2"/>
</dbReference>
<dbReference type="PROSITE" id="PS51379">
    <property type="entry name" value="4FE4S_FER_2"/>
    <property type="match status" value="2"/>
</dbReference>
<gene>
    <name type="primary">NDUFS8</name>
</gene>